<comment type="function">
    <text evidence="1">Specifically methylates the pseudouridine at position 1915 (m3Psi1915) in 23S rRNA.</text>
</comment>
<comment type="catalytic activity">
    <reaction evidence="1">
        <text>pseudouridine(1915) in 23S rRNA + S-adenosyl-L-methionine = N(3)-methylpseudouridine(1915) in 23S rRNA + S-adenosyl-L-homocysteine + H(+)</text>
        <dbReference type="Rhea" id="RHEA:42752"/>
        <dbReference type="Rhea" id="RHEA-COMP:10221"/>
        <dbReference type="Rhea" id="RHEA-COMP:10222"/>
        <dbReference type="ChEBI" id="CHEBI:15378"/>
        <dbReference type="ChEBI" id="CHEBI:57856"/>
        <dbReference type="ChEBI" id="CHEBI:59789"/>
        <dbReference type="ChEBI" id="CHEBI:65314"/>
        <dbReference type="ChEBI" id="CHEBI:74486"/>
        <dbReference type="EC" id="2.1.1.177"/>
    </reaction>
</comment>
<comment type="subunit">
    <text evidence="1">Homodimer.</text>
</comment>
<comment type="subcellular location">
    <subcellularLocation>
        <location evidence="1">Cytoplasm</location>
    </subcellularLocation>
</comment>
<comment type="similarity">
    <text evidence="1">Belongs to the RNA methyltransferase RlmH family.</text>
</comment>
<protein>
    <recommendedName>
        <fullName evidence="1">Ribosomal RNA large subunit methyltransferase H</fullName>
        <ecNumber evidence="1">2.1.1.177</ecNumber>
    </recommendedName>
    <alternativeName>
        <fullName evidence="1">23S rRNA (pseudouridine1915-N3)-methyltransferase</fullName>
    </alternativeName>
    <alternativeName>
        <fullName evidence="1">23S rRNA m3Psi1915 methyltransferase</fullName>
    </alternativeName>
    <alternativeName>
        <fullName evidence="1">rRNA (pseudouridine-N3-)-methyltransferase RlmH</fullName>
    </alternativeName>
</protein>
<organism>
    <name type="scientific">Ruegeria sp. (strain TM1040)</name>
    <name type="common">Silicibacter sp.</name>
    <dbReference type="NCBI Taxonomy" id="292414"/>
    <lineage>
        <taxon>Bacteria</taxon>
        <taxon>Pseudomonadati</taxon>
        <taxon>Pseudomonadota</taxon>
        <taxon>Alphaproteobacteria</taxon>
        <taxon>Rhodobacterales</taxon>
        <taxon>Roseobacteraceae</taxon>
        <taxon>Ruegeria</taxon>
    </lineage>
</organism>
<feature type="chain" id="PRO_0000260611" description="Ribosomal RNA large subunit methyltransferase H">
    <location>
        <begin position="1"/>
        <end position="156"/>
    </location>
</feature>
<feature type="binding site" evidence="1">
    <location>
        <position position="72"/>
    </location>
    <ligand>
        <name>S-adenosyl-L-methionine</name>
        <dbReference type="ChEBI" id="CHEBI:59789"/>
    </ligand>
</feature>
<feature type="binding site" evidence="1">
    <location>
        <position position="104"/>
    </location>
    <ligand>
        <name>S-adenosyl-L-methionine</name>
        <dbReference type="ChEBI" id="CHEBI:59789"/>
    </ligand>
</feature>
<feature type="binding site" evidence="1">
    <location>
        <begin position="123"/>
        <end position="128"/>
    </location>
    <ligand>
        <name>S-adenosyl-L-methionine</name>
        <dbReference type="ChEBI" id="CHEBI:59789"/>
    </ligand>
</feature>
<reference key="1">
    <citation type="submission" date="2006-05" db="EMBL/GenBank/DDBJ databases">
        <title>Complete sequence of chromosome of Silicibacter sp. TM1040.</title>
        <authorList>
            <consortium name="US DOE Joint Genome Institute"/>
            <person name="Copeland A."/>
            <person name="Lucas S."/>
            <person name="Lapidus A."/>
            <person name="Barry K."/>
            <person name="Detter J.C."/>
            <person name="Glavina del Rio T."/>
            <person name="Hammon N."/>
            <person name="Israni S."/>
            <person name="Dalin E."/>
            <person name="Tice H."/>
            <person name="Pitluck S."/>
            <person name="Brettin T."/>
            <person name="Bruce D."/>
            <person name="Han C."/>
            <person name="Tapia R."/>
            <person name="Goodwin L."/>
            <person name="Thompson L.S."/>
            <person name="Gilna P."/>
            <person name="Schmutz J."/>
            <person name="Larimer F."/>
            <person name="Land M."/>
            <person name="Hauser L."/>
            <person name="Kyrpides N."/>
            <person name="Kim E."/>
            <person name="Belas R."/>
            <person name="Moran M.A."/>
            <person name="Buchan A."/>
            <person name="Gonzalez J.M."/>
            <person name="Schell M.A."/>
            <person name="Sun F."/>
            <person name="Richardson P."/>
        </authorList>
    </citation>
    <scope>NUCLEOTIDE SEQUENCE [LARGE SCALE GENOMIC DNA]</scope>
    <source>
        <strain>TM1040</strain>
    </source>
</reference>
<accession>Q1GDM9</accession>
<sequence length="156" mass="17141">MRVHICAVGRLRAGPEKTLIDDYLQRFDRSGRALGLGPARVIEVEDKKNAGMGAEADLLRKALPKGALICTLDERGKVISSPDFAEKLAGWRDMGRQDLAFVIGGADGIDPSLRAEADFSISFGKMVWPHMMVRLMLAEQVYRSATILSGSPYHRV</sequence>
<keyword id="KW-0963">Cytoplasm</keyword>
<keyword id="KW-0489">Methyltransferase</keyword>
<keyword id="KW-1185">Reference proteome</keyword>
<keyword id="KW-0698">rRNA processing</keyword>
<keyword id="KW-0949">S-adenosyl-L-methionine</keyword>
<keyword id="KW-0808">Transferase</keyword>
<name>RLMH_RUEST</name>
<dbReference type="EC" id="2.1.1.177" evidence="1"/>
<dbReference type="EMBL" id="CP000377">
    <property type="protein sequence ID" value="ABF65237.1"/>
    <property type="molecule type" value="Genomic_DNA"/>
</dbReference>
<dbReference type="RefSeq" id="WP_011539824.1">
    <property type="nucleotide sequence ID" value="NC_008044.1"/>
</dbReference>
<dbReference type="SMR" id="Q1GDM9"/>
<dbReference type="STRING" id="292414.TM1040_2505"/>
<dbReference type="KEGG" id="sit:TM1040_2505"/>
<dbReference type="eggNOG" id="COG1576">
    <property type="taxonomic scope" value="Bacteria"/>
</dbReference>
<dbReference type="HOGENOM" id="CLU_100552_1_1_5"/>
<dbReference type="OrthoDB" id="9806643at2"/>
<dbReference type="Proteomes" id="UP000000636">
    <property type="component" value="Chromosome"/>
</dbReference>
<dbReference type="GO" id="GO:0005737">
    <property type="term" value="C:cytoplasm"/>
    <property type="evidence" value="ECO:0007669"/>
    <property type="project" value="UniProtKB-SubCell"/>
</dbReference>
<dbReference type="GO" id="GO:0070038">
    <property type="term" value="F:rRNA (pseudouridine-N3-)-methyltransferase activity"/>
    <property type="evidence" value="ECO:0007669"/>
    <property type="project" value="UniProtKB-UniRule"/>
</dbReference>
<dbReference type="CDD" id="cd18081">
    <property type="entry name" value="RlmH-like"/>
    <property type="match status" value="1"/>
</dbReference>
<dbReference type="Gene3D" id="3.40.1280.10">
    <property type="match status" value="1"/>
</dbReference>
<dbReference type="HAMAP" id="MF_00658">
    <property type="entry name" value="23SrRNA_methyltr_H"/>
    <property type="match status" value="1"/>
</dbReference>
<dbReference type="InterPro" id="IPR029028">
    <property type="entry name" value="Alpha/beta_knot_MTases"/>
</dbReference>
<dbReference type="InterPro" id="IPR003742">
    <property type="entry name" value="RlmH-like"/>
</dbReference>
<dbReference type="InterPro" id="IPR029026">
    <property type="entry name" value="tRNA_m1G_MTases_N"/>
</dbReference>
<dbReference type="NCBIfam" id="NF000988">
    <property type="entry name" value="PRK00103.2-2"/>
    <property type="match status" value="1"/>
</dbReference>
<dbReference type="NCBIfam" id="NF000989">
    <property type="entry name" value="PRK00103.2-3"/>
    <property type="match status" value="1"/>
</dbReference>
<dbReference type="PANTHER" id="PTHR33603">
    <property type="entry name" value="METHYLTRANSFERASE"/>
    <property type="match status" value="1"/>
</dbReference>
<dbReference type="PANTHER" id="PTHR33603:SF1">
    <property type="entry name" value="RIBOSOMAL RNA LARGE SUBUNIT METHYLTRANSFERASE H"/>
    <property type="match status" value="1"/>
</dbReference>
<dbReference type="Pfam" id="PF02590">
    <property type="entry name" value="SPOUT_MTase"/>
    <property type="match status" value="1"/>
</dbReference>
<dbReference type="PIRSF" id="PIRSF004505">
    <property type="entry name" value="MT_bac"/>
    <property type="match status" value="1"/>
</dbReference>
<dbReference type="SUPFAM" id="SSF75217">
    <property type="entry name" value="alpha/beta knot"/>
    <property type="match status" value="1"/>
</dbReference>
<evidence type="ECO:0000255" key="1">
    <source>
        <dbReference type="HAMAP-Rule" id="MF_00658"/>
    </source>
</evidence>
<proteinExistence type="inferred from homology"/>
<gene>
    <name evidence="1" type="primary">rlmH</name>
    <name type="ordered locus">TM1040_2505</name>
</gene>